<geneLocation type="plasmid">
    <name>pCS1</name>
</geneLocation>
<geneLocation type="plasmid">
    <name>p948</name>
</geneLocation>
<accession>Q84GK0</accession>
<accession>E3PP92</accession>
<dbReference type="EC" id="3.4.21.-"/>
<dbReference type="EMBL" id="AY163491">
    <property type="protein sequence ID" value="AAO17297.1"/>
    <property type="molecule type" value="Genomic_DNA"/>
</dbReference>
<dbReference type="EMBL" id="FN649418">
    <property type="protein sequence ID" value="CBJ04449.1"/>
    <property type="molecule type" value="Genomic_DNA"/>
</dbReference>
<dbReference type="RefSeq" id="WP_001045019.1">
    <property type="nucleotide sequence ID" value="NC_017724.1"/>
</dbReference>
<dbReference type="SMR" id="Q84GK0"/>
<dbReference type="MEROPS" id="N04.002"/>
<dbReference type="MEROPS" id="S06.009"/>
<dbReference type="KEGG" id="elh:ETEC_p948_0020"/>
<dbReference type="HOGENOM" id="CLU_000723_0_0_6"/>
<dbReference type="GO" id="GO:0009279">
    <property type="term" value="C:cell outer membrane"/>
    <property type="evidence" value="ECO:0007669"/>
    <property type="project" value="UniProtKB-SubCell"/>
</dbReference>
<dbReference type="GO" id="GO:0009986">
    <property type="term" value="C:cell surface"/>
    <property type="evidence" value="ECO:0007669"/>
    <property type="project" value="UniProtKB-SubCell"/>
</dbReference>
<dbReference type="GO" id="GO:0005576">
    <property type="term" value="C:extracellular region"/>
    <property type="evidence" value="ECO:0007669"/>
    <property type="project" value="UniProtKB-SubCell"/>
</dbReference>
<dbReference type="GO" id="GO:0042597">
    <property type="term" value="C:periplasmic space"/>
    <property type="evidence" value="ECO:0007669"/>
    <property type="project" value="UniProtKB-SubCell"/>
</dbReference>
<dbReference type="GO" id="GO:0004252">
    <property type="term" value="F:serine-type endopeptidase activity"/>
    <property type="evidence" value="ECO:0007669"/>
    <property type="project" value="InterPro"/>
</dbReference>
<dbReference type="GO" id="GO:0006508">
    <property type="term" value="P:proteolysis"/>
    <property type="evidence" value="ECO:0007669"/>
    <property type="project" value="UniProtKB-KW"/>
</dbReference>
<dbReference type="Gene3D" id="2.160.20.20">
    <property type="match status" value="1"/>
</dbReference>
<dbReference type="Gene3D" id="2.40.10.120">
    <property type="match status" value="1"/>
</dbReference>
<dbReference type="Gene3D" id="2.40.128.130">
    <property type="entry name" value="Autotransporter beta-domain"/>
    <property type="match status" value="1"/>
</dbReference>
<dbReference type="InterPro" id="IPR005546">
    <property type="entry name" value="Autotransporte_beta"/>
</dbReference>
<dbReference type="InterPro" id="IPR036709">
    <property type="entry name" value="Autotransporte_beta_dom_sf"/>
</dbReference>
<dbReference type="InterPro" id="IPR012332">
    <property type="entry name" value="Autotransporter_pectin_lyase_C"/>
</dbReference>
<dbReference type="InterPro" id="IPR050909">
    <property type="entry name" value="Bact_Autotransporter_VF"/>
</dbReference>
<dbReference type="InterPro" id="IPR006315">
    <property type="entry name" value="OM_autotransptr_brl_dom"/>
</dbReference>
<dbReference type="InterPro" id="IPR011050">
    <property type="entry name" value="Pectin_lyase_fold/virulence"/>
</dbReference>
<dbReference type="InterPro" id="IPR009003">
    <property type="entry name" value="Peptidase_S1_PA"/>
</dbReference>
<dbReference type="InterPro" id="IPR000710">
    <property type="entry name" value="Peptidase_S6"/>
</dbReference>
<dbReference type="InterPro" id="IPR030396">
    <property type="entry name" value="Peptidase_S6_dom"/>
</dbReference>
<dbReference type="NCBIfam" id="TIGR01414">
    <property type="entry name" value="autotrans_barl"/>
    <property type="match status" value="1"/>
</dbReference>
<dbReference type="PANTHER" id="PTHR12338:SF10">
    <property type="entry name" value="ADHESION AND PENETRATION PROTEIN AUTOTRANSPORTER"/>
    <property type="match status" value="1"/>
</dbReference>
<dbReference type="PANTHER" id="PTHR12338">
    <property type="entry name" value="AUTOTRANSPORTER"/>
    <property type="match status" value="1"/>
</dbReference>
<dbReference type="Pfam" id="PF03797">
    <property type="entry name" value="Autotransporter"/>
    <property type="match status" value="1"/>
</dbReference>
<dbReference type="Pfam" id="PF24078">
    <property type="entry name" value="Beta-sol_PIC_HAP1_IgA0_2nd"/>
    <property type="match status" value="1"/>
</dbReference>
<dbReference type="Pfam" id="PF02395">
    <property type="entry name" value="Peptidase_S6"/>
    <property type="match status" value="1"/>
</dbReference>
<dbReference type="PRINTS" id="PR00921">
    <property type="entry name" value="IGASERPTASE"/>
</dbReference>
<dbReference type="SMART" id="SM00869">
    <property type="entry name" value="Autotransporter"/>
    <property type="match status" value="1"/>
</dbReference>
<dbReference type="SUPFAM" id="SSF103515">
    <property type="entry name" value="Autotransporter"/>
    <property type="match status" value="1"/>
</dbReference>
<dbReference type="SUPFAM" id="SSF51126">
    <property type="entry name" value="Pectin lyase-like"/>
    <property type="match status" value="1"/>
</dbReference>
<dbReference type="SUPFAM" id="SSF50494">
    <property type="entry name" value="Trypsin-like serine proteases"/>
    <property type="match status" value="1"/>
</dbReference>
<dbReference type="PROSITE" id="PS51208">
    <property type="entry name" value="AUTOTRANSPORTER"/>
    <property type="match status" value="1"/>
</dbReference>
<dbReference type="PROSITE" id="PS51691">
    <property type="entry name" value="PEPTIDASE_S6"/>
    <property type="match status" value="1"/>
</dbReference>
<comment type="function">
    <text evidence="5">Autotransporter serine protease probably involved in virulence.</text>
</comment>
<comment type="activity regulation">
    <text>Inhibited by phenylmethylsulfonyl fluoride.</text>
</comment>
<comment type="subcellular location">
    <molecule>Serine protease EatA</molecule>
    <subcellularLocation>
        <location evidence="1">Periplasm</location>
    </subcellularLocation>
</comment>
<comment type="subcellular location">
    <molecule>Secreted autotransporter protein EatA</molecule>
    <subcellularLocation>
        <location>Secreted</location>
    </subcellularLocation>
    <subcellularLocation>
        <location>Cell surface</location>
    </subcellularLocation>
</comment>
<comment type="subcellular location">
    <molecule>Autotransporter protein EatA translocator</molecule>
    <subcellularLocation>
        <location evidence="1">Cell outer membrane</location>
        <topology evidence="1">Multi-pass membrane protein</topology>
    </subcellularLocation>
    <text evidence="1">The cleaved C-terminal fragment (autotransporter domain) is localized in the outer membrane.</text>
</comment>
<comment type="domain">
    <text evidence="6">The signal peptide, cleaved at the inner membrane, guides the autotransporter protein to the periplasmic space. Then, insertion of the C-terminal translocator domain in the outer membrane forms a hydrophilic pore for the translocation of the passenger domain to the bacterial cell surface, with subsequent cleavage (Probable).</text>
</comment>
<comment type="PTM">
    <text evidence="6">Cleaved to release the mature protein from the outer membrane.</text>
</comment>
<comment type="miscellaneous">
    <text>Leads to accelerated virulence in the rabbit ileal loop model of infection. Nevertheless, the relationship between the enzymatic and potential virulence functions is uncertain.</text>
</comment>
<evidence type="ECO:0000250" key="1"/>
<evidence type="ECO:0000255" key="2"/>
<evidence type="ECO:0000255" key="3">
    <source>
        <dbReference type="PROSITE-ProRule" id="PRU00556"/>
    </source>
</evidence>
<evidence type="ECO:0000255" key="4">
    <source>
        <dbReference type="PROSITE-ProRule" id="PRU01028"/>
    </source>
</evidence>
<evidence type="ECO:0000269" key="5">
    <source>
    </source>
</evidence>
<evidence type="ECO:0000305" key="6"/>
<keyword id="KW-0998">Cell outer membrane</keyword>
<keyword id="KW-0378">Hydrolase</keyword>
<keyword id="KW-0472">Membrane</keyword>
<keyword id="KW-0574">Periplasm</keyword>
<keyword id="KW-0614">Plasmid</keyword>
<keyword id="KW-0645">Protease</keyword>
<keyword id="KW-0964">Secreted</keyword>
<keyword id="KW-0720">Serine protease</keyword>
<keyword id="KW-0732">Signal</keyword>
<keyword id="KW-0812">Transmembrane</keyword>
<keyword id="KW-1134">Transmembrane beta strand</keyword>
<keyword id="KW-0843">Virulence</keyword>
<keyword id="KW-0865">Zymogen</keyword>
<gene>
    <name type="primary">eatA</name>
    <name type="ordered locus">ETEC_p948_0020</name>
</gene>
<reference key="1">
    <citation type="journal article" date="2004" name="Infect. Immun.">
        <title>Identification and molecular characterization of EatA, an autotransporter protein of enterotoxigenic Escherichia coli.</title>
        <authorList>
            <person name="Patel S.K."/>
            <person name="Dotson J."/>
            <person name="Allen K.P."/>
            <person name="Fleckenstein J.M."/>
        </authorList>
    </citation>
    <scope>NUCLEOTIDE SEQUENCE [GENOMIC DNA]</scope>
    <scope>FUNCTION</scope>
    <scope>SUBCELLULAR LOCATION</scope>
    <scope>MUTAGENESIS OF HIS-134; ASP-162 AND SER-267</scope>
    <source>
        <strain>H10407 / ETEC</strain>
        <plasmid>pCS1</plasmid>
    </source>
</reference>
<reference key="2">
    <citation type="journal article" date="2010" name="J. Bacteriol.">
        <title>A commensal gone bad: complete genome sequence of the prototypical enterotoxigenic Escherichia coli strain H10407.</title>
        <authorList>
            <person name="Crossman L.C."/>
            <person name="Chaudhuri R.R."/>
            <person name="Beatson S.A."/>
            <person name="Wells T.J."/>
            <person name="Desvaux M."/>
            <person name="Cunningham A.F."/>
            <person name="Petty N.K."/>
            <person name="Mahon V."/>
            <person name="Brinkley C."/>
            <person name="Hobman J.L."/>
            <person name="Savarino S.J."/>
            <person name="Turner S.M."/>
            <person name="Pallen M.J."/>
            <person name="Penn C.W."/>
            <person name="Parkhill J."/>
            <person name="Turner A.K."/>
            <person name="Johnson T.J."/>
            <person name="Thomson N.R."/>
            <person name="Smith S.G."/>
            <person name="Henderson I.R."/>
        </authorList>
    </citation>
    <scope>NUCLEOTIDE SEQUENCE [LARGE SCALE GENOMIC DNA]</scope>
    <source>
        <strain>H10407 / ETEC</strain>
        <plasmid>p948</plasmid>
    </source>
</reference>
<name>EATA_ECOH1</name>
<sequence length="1364" mass="147696">MNKVFSLKYSFLAKGFIAVSELARRVSVKGKLKSASSIIISPITIAIVSYAPPSLAATVNADISYQTFRDFAENKGAFIVGASNINIYDKNGVLVGVLDKAPMPDFSSATMNTGTLPPGDHTLYSPQYVVTAKHVNGSDIMSFGHIQNNYTVVGENNHNSLDIKIRRLNKIVTEVAPAEISSVGAVNGAYQEGGRFKAFYRLGGGLQYIKDKNGNLTPVYTNGGFLTGGTISALSSYNNGQMITAPTGDIFNPANGPLANYLNKGDSGSPLFAYDSLDKKWVLVGVLSSGSEHGNNWVVTTQDFLHQQPKHDFDKTISYDSEKGSLQWRYNKNSGVGTLSQESVVWDMHGKKGGDLNAGKNLQFTGNNGEIILHDSIDQGAGYLQFFDNYTVTSLTDQTWTGGGIITEKGVNVLWQVNGVNDDNLHKVGEGTLTVNGKGVNNGGLKVGDGTVILNQRPDDNGHKQAFSSINISSGRATVILSDANQVNPDKISWGYRGGTLDLNGNNVNFTRLQAADYGAIVSNNNKNKSELTLKLQTLNENDISVDVKTYEVFGGHGSPGDLYYVPASNTYFILKSKAYGPFFSDLDNTNVWQNVGHDRDKAIQIVKQQKIGESSQPYMFHGQLNGYMDVNIHPLSGKDVLTLDGSVNLPEGVITKKSGTLIFQGHPVIHAGMTTSAGQSDWENRQFTMDKLRLDAATFHLSRNAHMQGDISAANGSTVILGSSRVFTDKNDGTGNAVSSVEGSSIATTAGDQSYYSGNVLLENHSSLEVRENFTGGIEAYDSSVSVTSQNAIFDHVGSFVNSSLLLEKGAKLTAQSGIFTNNTMKIKENASLTLTGIPSVGKPGYYSPVTSTTEGIHLGERASLSVKNMGYLSSNITAENSAAIINLGDSNATIGKTDSPLFSTLMRGYNAVLQGNIMGPQSSVNMNNALWHSDRNSELKELKANDSQIELGVRGHFAKLRVKELIASNSVFLVHANNSQADQLNVTDKLQGSNNTILVDFFNKAANGTNVTLITAPKGSDENTFKAGTQQIGFSNITPEIRTENTDTATQWVLTGYQSVADARASKIATDFMDSGYKSFLTEVNNLNKRMGDLRDSQGDAGGWARIMNGTGSGESGYRDNYTHVQIGADRKHELNGIDLFTGALLTYTDNNASSQAFSGKTKSLGGGVYASGLFESGAYFDLIGKYLHHDNRYTLNFASLGERSYTSHSLYAGAEIGYRYHMSENTWVEPQMELVYGSVSGKSFNWKDQGMQLSMKDKDYHPLIGRTGVDVGRAFSGDTWKVTVRAGLGYQFDLLANGETVLQDASGKKHFKGEKDSRMLMNVGTNVEVKDNMRFGLELEKSAFGRYNIDNSINANFRYYF</sequence>
<organism>
    <name type="scientific">Escherichia coli O78:H11 (strain H10407 / ETEC)</name>
    <dbReference type="NCBI Taxonomy" id="316401"/>
    <lineage>
        <taxon>Bacteria</taxon>
        <taxon>Pseudomonadati</taxon>
        <taxon>Pseudomonadota</taxon>
        <taxon>Gammaproteobacteria</taxon>
        <taxon>Enterobacterales</taxon>
        <taxon>Enterobacteriaceae</taxon>
        <taxon>Escherichia</taxon>
    </lineage>
</organism>
<feature type="signal peptide" evidence="2">
    <location>
        <begin position="1"/>
        <end position="56"/>
    </location>
</feature>
<feature type="chain" id="PRO_0000026952" description="Serine protease EatA">
    <location>
        <begin position="57"/>
        <end position="1364"/>
    </location>
</feature>
<feature type="chain" id="PRO_0000387591" description="Secreted autotransporter protein EatA">
    <location>
        <begin position="57"/>
        <end position="1098"/>
    </location>
</feature>
<feature type="chain" id="PRO_0000026953" description="Autotransporter protein EatA translocator" evidence="2">
    <location>
        <begin position="1099"/>
        <end position="1364"/>
    </location>
</feature>
<feature type="domain" description="Peptidase S6" evidence="4">
    <location>
        <begin position="57"/>
        <end position="307"/>
    </location>
</feature>
<feature type="domain" description="Autotransporter" evidence="3">
    <location>
        <begin position="1098"/>
        <end position="1364"/>
    </location>
</feature>
<feature type="active site" description="Charge relay system">
    <location>
        <position position="134"/>
    </location>
</feature>
<feature type="active site" description="Charge relay system">
    <location>
        <position position="162"/>
    </location>
</feature>
<feature type="active site" description="Charge relay system">
    <location>
        <position position="267"/>
    </location>
</feature>
<feature type="site" description="Cleavage" evidence="2">
    <location>
        <begin position="1098"/>
        <end position="1099"/>
    </location>
</feature>
<feature type="mutagenesis site" description="Loss of activity." evidence="5">
    <original>H</original>
    <variation>R</variation>
    <location>
        <position position="134"/>
    </location>
</feature>
<feature type="mutagenesis site" description="Loss of activity." evidence="5">
    <original>D</original>
    <variation>A</variation>
    <location>
        <position position="162"/>
    </location>
</feature>
<feature type="mutagenesis site" description="Loss of activity." evidence="5">
    <original>S</original>
    <variation>G</variation>
    <location>
        <position position="267"/>
    </location>
</feature>
<proteinExistence type="evidence at protein level"/>
<protein>
    <recommendedName>
        <fullName>Serine protease EatA</fullName>
        <ecNumber>3.4.21.-</ecNumber>
    </recommendedName>
    <alternativeName>
        <fullName>Autotransporter protein EatA</fullName>
    </alternativeName>
    <alternativeName>
        <fullName>ETEC autotransporter A</fullName>
    </alternativeName>
    <component>
        <recommendedName>
            <fullName>Secreted autotransporter protein EatA</fullName>
        </recommendedName>
    </component>
    <component>
        <recommendedName>
            <fullName>Autotransporter protein EatA translocator</fullName>
        </recommendedName>
    </component>
</protein>